<accession>P0A9C5</accession>
<accession>P06711</accession>
<accession>Q2M8G7</accession>
<reference key="1">
    <citation type="journal article" date="1987" name="Nucleic Acids Res.">
        <title>The complete nucleotide sequence of the glnALG operon of Escherichia coli K12.</title>
        <authorList>
            <person name="Miranda-Rios J."/>
            <person name="Sanchez-Pescador R."/>
            <person name="Urdea M."/>
            <person name="Covarrubias A.A."/>
        </authorList>
    </citation>
    <scope>NUCLEOTIDE SEQUENCE [GENOMIC DNA]</scope>
    <source>
        <strain>K12</strain>
    </source>
</reference>
<reference key="2">
    <citation type="journal article" date="1986" name="J. Biol. Chem.">
        <title>Amino acid sequence of Escherichia coli glutamine synthetase deduced from the DNA nucleotide sequence.</title>
        <authorList>
            <person name="Colombo G."/>
            <person name="Villafranca J.J."/>
        </authorList>
    </citation>
    <scope>NUCLEOTIDE SEQUENCE [GENOMIC DNA]</scope>
</reference>
<reference key="3">
    <citation type="journal article" date="1993" name="Nucleic Acids Res.">
        <title>Analysis of the Escherichia coli genome. III. DNA sequence of the region from 87.2 to 89.2 minutes.</title>
        <authorList>
            <person name="Plunkett G. III"/>
            <person name="Burland V."/>
            <person name="Daniels D.L."/>
            <person name="Blattner F.R."/>
        </authorList>
    </citation>
    <scope>NUCLEOTIDE SEQUENCE [LARGE SCALE GENOMIC DNA]</scope>
    <source>
        <strain>K12 / MG1655 / ATCC 47076</strain>
    </source>
</reference>
<reference key="4">
    <citation type="journal article" date="1997" name="Science">
        <title>The complete genome sequence of Escherichia coli K-12.</title>
        <authorList>
            <person name="Blattner F.R."/>
            <person name="Plunkett G. III"/>
            <person name="Bloch C.A."/>
            <person name="Perna N.T."/>
            <person name="Burland V."/>
            <person name="Riley M."/>
            <person name="Collado-Vides J."/>
            <person name="Glasner J.D."/>
            <person name="Rode C.K."/>
            <person name="Mayhew G.F."/>
            <person name="Gregor J."/>
            <person name="Davis N.W."/>
            <person name="Kirkpatrick H.A."/>
            <person name="Goeden M.A."/>
            <person name="Rose D.J."/>
            <person name="Mau B."/>
            <person name="Shao Y."/>
        </authorList>
    </citation>
    <scope>NUCLEOTIDE SEQUENCE [LARGE SCALE GENOMIC DNA]</scope>
    <source>
        <strain>K12 / MG1655 / ATCC 47076</strain>
    </source>
</reference>
<reference key="5">
    <citation type="journal article" date="2006" name="Mol. Syst. Biol.">
        <title>Highly accurate genome sequences of Escherichia coli K-12 strains MG1655 and W3110.</title>
        <authorList>
            <person name="Hayashi K."/>
            <person name="Morooka N."/>
            <person name="Yamamoto Y."/>
            <person name="Fujita K."/>
            <person name="Isono K."/>
            <person name="Choi S."/>
            <person name="Ohtsubo E."/>
            <person name="Baba T."/>
            <person name="Wanner B.L."/>
            <person name="Mori H."/>
            <person name="Horiuchi T."/>
        </authorList>
    </citation>
    <scope>NUCLEOTIDE SEQUENCE [LARGE SCALE GENOMIC DNA]</scope>
    <source>
        <strain>K12 / W3110 / ATCC 27325 / DSM 5911</strain>
    </source>
</reference>
<reference key="6">
    <citation type="journal article" date="1983" name="Mol. Gen. Genet.">
        <title>Nucleotide sequence of the glnA control region of Escherichia coli.</title>
        <authorList>
            <person name="Covarrubias A.A."/>
            <person name="Bastarrachea F."/>
        </authorList>
    </citation>
    <scope>NUCLEOTIDE SEQUENCE [GENOMIC DNA] OF 1-44</scope>
</reference>
<reference key="7">
    <citation type="journal article" date="1985" name="Proc. Natl. Acad. Sci. U.S.A.">
        <title>Expression of glnA in Escherichia coli is regulated at tandem promoters.</title>
        <authorList>
            <person name="Reitzer L.J."/>
            <person name="Magasanik B."/>
        </authorList>
    </citation>
    <scope>NUCLEOTIDE SEQUENCE [GENOMIC DNA] OF 1-10</scope>
</reference>
<reference key="8">
    <citation type="journal article" date="1997" name="Electrophoresis">
        <title>Comparing the predicted and observed properties of proteins encoded in the genome of Escherichia coli K-12.</title>
        <authorList>
            <person name="Link A.J."/>
            <person name="Robison K."/>
            <person name="Church G.M."/>
        </authorList>
    </citation>
    <scope>PROTEIN SEQUENCE OF 2-12</scope>
    <source>
        <strain>K12 / EMG2</strain>
    </source>
</reference>
<reference key="9">
    <citation type="journal article" date="1985" name="Gene">
        <title>Nucleotide sequence of the glnA-glnL intercistronic region of Escherichia coli.</title>
        <authorList>
            <person name="Rocha M."/>
            <person name="Vazquez M."/>
            <person name="Garciarrubio A."/>
            <person name="Covarrubias A.A."/>
        </authorList>
    </citation>
    <scope>NUCLEOTIDE SEQUENCE [GENOMIC DNA] OF 363-469</scope>
</reference>
<reference key="10">
    <citation type="journal article" date="1971" name="J. Biol. Chem.">
        <title>Primary structure of Escherichia coli glutamine synthetase. II. The complete amino acid sequence of a tryptic heneicosapeptide containing covalently bound adenylic acid.</title>
        <authorList>
            <person name="Heinrikson R.L."/>
            <person name="Kingdon H.S."/>
        </authorList>
    </citation>
    <scope>PROTEIN SEQUENCE OF 387-406</scope>
    <scope>SEQUENCE REVISION</scope>
    <scope>AMPYLATION AT TYR-398</scope>
</reference>
<reference key="11">
    <citation type="journal article" date="1970" name="J. Biol. Chem.">
        <title>The amino acid sequence in the vicinity of the covalently bound adenylic acid in glutamine synthetase from Escherichia coli.</title>
        <authorList>
            <person name="Heinrikson R.L."/>
            <person name="Kingdon H.S."/>
        </authorList>
    </citation>
    <scope>PROTEIN SEQUENCE OF 394-406</scope>
    <scope>AMPYLATION AT TYR-398</scope>
</reference>
<reference key="12">
    <citation type="journal article" date="1984" name="J. Bacteriol.">
        <title>Identification and regulation of the glnL operator-promoter of the complex glnALG operon of Escherichia coli.</title>
        <authorList>
            <person name="Ueno-Nishio S."/>
            <person name="Mango S."/>
            <person name="Reitzer L.J."/>
            <person name="Magasanik B."/>
        </authorList>
    </citation>
    <scope>NUCLEOTIDE SEQUENCE [GENOMIC DNA] OF 456-469</scope>
</reference>
<reference key="13">
    <citation type="journal article" date="1997" name="Electrophoresis">
        <title>Escherichia coli proteome analysis using the gene-protein database.</title>
        <authorList>
            <person name="VanBogelen R.A."/>
            <person name="Abshire K.Z."/>
            <person name="Moldover B."/>
            <person name="Olson E.R."/>
            <person name="Neidhardt F.C."/>
        </authorList>
    </citation>
    <scope>IDENTIFICATION BY 2D-GEL</scope>
</reference>
<keyword id="KW-0002">3D-structure</keyword>
<keyword id="KW-0067">ATP-binding</keyword>
<keyword id="KW-0963">Cytoplasm</keyword>
<keyword id="KW-0903">Direct protein sequencing</keyword>
<keyword id="KW-0436">Ligase</keyword>
<keyword id="KW-0460">Magnesium</keyword>
<keyword id="KW-0479">Metal-binding</keyword>
<keyword id="KW-0547">Nucleotide-binding</keyword>
<keyword id="KW-0597">Phosphoprotein</keyword>
<keyword id="KW-1185">Reference proteome</keyword>
<protein>
    <recommendedName>
        <fullName evidence="1">Glutamine synthetase</fullName>
        <shortName evidence="1">GS</shortName>
        <ecNumber evidence="1">6.3.1.2</ecNumber>
    </recommendedName>
    <alternativeName>
        <fullName evidence="11">Glutamate--ammonia ligase</fullName>
    </alternativeName>
    <alternativeName>
        <fullName evidence="1">Glutamine synthetase I beta</fullName>
        <shortName evidence="1">GSI beta</shortName>
    </alternativeName>
</protein>
<feature type="initiator methionine" description="Removed" evidence="10">
    <location>
        <position position="1"/>
    </location>
</feature>
<feature type="chain" id="PRO_0000153235" description="Glutamine synthetase">
    <location>
        <begin position="2"/>
        <end position="469"/>
    </location>
</feature>
<feature type="domain" description="GS beta-grasp" evidence="6">
    <location>
        <begin position="13"/>
        <end position="97"/>
    </location>
</feature>
<feature type="domain" description="GS catalytic" evidence="7">
    <location>
        <begin position="105"/>
        <end position="469"/>
    </location>
</feature>
<feature type="binding site" evidence="4">
    <location>
        <position position="130"/>
    </location>
    <ligand>
        <name>Mg(2+)</name>
        <dbReference type="ChEBI" id="CHEBI:18420"/>
        <label>1</label>
    </ligand>
</feature>
<feature type="binding site" evidence="4">
    <location>
        <position position="132"/>
    </location>
    <ligand>
        <name>Mg(2+)</name>
        <dbReference type="ChEBI" id="CHEBI:18420"/>
        <label>2</label>
    </ligand>
</feature>
<feature type="binding site" evidence="1">
    <location>
        <position position="208"/>
    </location>
    <ligand>
        <name>ATP</name>
        <dbReference type="ChEBI" id="CHEBI:30616"/>
    </ligand>
</feature>
<feature type="binding site" evidence="4">
    <location>
        <position position="213"/>
    </location>
    <ligand>
        <name>Mg(2+)</name>
        <dbReference type="ChEBI" id="CHEBI:18420"/>
        <label>2</label>
    </ligand>
</feature>
<feature type="binding site" evidence="4">
    <location>
        <position position="221"/>
    </location>
    <ligand>
        <name>Mg(2+)</name>
        <dbReference type="ChEBI" id="CHEBI:18420"/>
        <label>2</label>
    </ligand>
</feature>
<feature type="binding site" evidence="1">
    <location>
        <begin position="265"/>
        <end position="266"/>
    </location>
    <ligand>
        <name>L-glutamate</name>
        <dbReference type="ChEBI" id="CHEBI:29985"/>
    </ligand>
</feature>
<feature type="binding site" evidence="2">
    <location>
        <position position="266"/>
    </location>
    <ligand>
        <name>L-glutamate</name>
        <dbReference type="ChEBI" id="CHEBI:29985"/>
    </ligand>
</feature>
<feature type="binding site" evidence="4">
    <location>
        <position position="270"/>
    </location>
    <ligand>
        <name>Mg(2+)</name>
        <dbReference type="ChEBI" id="CHEBI:18420"/>
        <label>1</label>
    </ligand>
</feature>
<feature type="binding site" evidence="1">
    <location>
        <begin position="272"/>
        <end position="274"/>
    </location>
    <ligand>
        <name>ATP</name>
        <dbReference type="ChEBI" id="CHEBI:30616"/>
    </ligand>
</feature>
<feature type="binding site" evidence="3">
    <location>
        <position position="274"/>
    </location>
    <ligand>
        <name>ATP</name>
        <dbReference type="ChEBI" id="CHEBI:30616"/>
    </ligand>
</feature>
<feature type="binding site" evidence="1">
    <location>
        <position position="322"/>
    </location>
    <ligand>
        <name>L-glutamate</name>
        <dbReference type="ChEBI" id="CHEBI:29985"/>
    </ligand>
</feature>
<feature type="binding site" evidence="1">
    <location>
        <position position="328"/>
    </location>
    <ligand>
        <name>L-glutamate</name>
        <dbReference type="ChEBI" id="CHEBI:29985"/>
    </ligand>
</feature>
<feature type="binding site" evidence="4">
    <location>
        <position position="340"/>
    </location>
    <ligand>
        <name>ATP</name>
        <dbReference type="ChEBI" id="CHEBI:30616"/>
    </ligand>
</feature>
<feature type="binding site" evidence="4">
    <location>
        <position position="340"/>
    </location>
    <ligand>
        <name>L-glutamate</name>
        <dbReference type="ChEBI" id="CHEBI:29985"/>
    </ligand>
</feature>
<feature type="binding site" evidence="4">
    <location>
        <position position="345"/>
    </location>
    <ligand>
        <name>ATP</name>
        <dbReference type="ChEBI" id="CHEBI:30616"/>
    </ligand>
</feature>
<feature type="binding site" evidence="3">
    <location>
        <position position="353"/>
    </location>
    <ligand>
        <name>ATP</name>
        <dbReference type="ChEBI" id="CHEBI:30616"/>
    </ligand>
</feature>
<feature type="binding site" evidence="4">
    <location>
        <position position="358"/>
    </location>
    <ligand>
        <name>Mg(2+)</name>
        <dbReference type="ChEBI" id="CHEBI:18420"/>
        <label>1</label>
    </ligand>
</feature>
<feature type="binding site" evidence="1">
    <location>
        <position position="360"/>
    </location>
    <ligand>
        <name>L-glutamate</name>
        <dbReference type="ChEBI" id="CHEBI:29985"/>
    </ligand>
</feature>
<feature type="modified residue" description="O-AMP-tyrosine" evidence="8 9">
    <location>
        <position position="398"/>
    </location>
</feature>
<feature type="sequence conflict" description="In Ref. 2; AAA23879." evidence="11" ref="2">
    <original>C</original>
    <variation>S</variation>
    <location>
        <position position="90"/>
    </location>
</feature>
<feature type="sequence conflict" description="In Ref. 2; AAA23879." evidence="11" ref="2">
    <original>IA</original>
    <variation>MS</variation>
    <location>
        <begin position="108"/>
        <end position="109"/>
    </location>
</feature>
<feature type="sequence conflict" description="In Ref. 2; AAA23879." evidence="11" ref="2">
    <original>C</original>
    <variation>S</variation>
    <location>
        <position position="197"/>
    </location>
</feature>
<feature type="sequence conflict" description="In Ref. 1; CAA28806." evidence="11" ref="1">
    <original>T</original>
    <variation>I</variation>
    <location>
        <position position="228"/>
    </location>
</feature>
<feature type="sequence conflict" description="In Ref. 1; CAA28806." evidence="11" ref="1">
    <original>AH</original>
    <variation>VRN</variation>
    <location>
        <begin position="247"/>
        <end position="248"/>
    </location>
</feature>
<feature type="sequence conflict" description="In Ref. 1; CAA28806." evidence="11" ref="1">
    <original>HA</original>
    <variation>QP</variation>
    <location>
        <begin position="305"/>
        <end position="306"/>
    </location>
</feature>
<feature type="sequence conflict" description="In Ref. 10; AA sequence and 11; AA sequence." evidence="11" ref="10 11">
    <original>DK</original>
    <variation>KD</variation>
    <location>
        <begin position="394"/>
        <end position="395"/>
    </location>
</feature>
<feature type="helix" evidence="13">
    <location>
        <begin position="3"/>
        <end position="12"/>
    </location>
</feature>
<feature type="strand" evidence="13">
    <location>
        <begin position="17"/>
        <end position="23"/>
    </location>
</feature>
<feature type="strand" evidence="13">
    <location>
        <begin position="29"/>
        <end position="35"/>
    </location>
</feature>
<feature type="helix" evidence="13">
    <location>
        <begin position="36"/>
        <end position="38"/>
    </location>
</feature>
<feature type="helix" evidence="13">
    <location>
        <begin position="41"/>
        <end position="46"/>
    </location>
</feature>
<feature type="strand" evidence="13">
    <location>
        <begin position="48"/>
        <end position="50"/>
    </location>
</feature>
<feature type="strand" evidence="12">
    <location>
        <begin position="53"/>
        <end position="55"/>
    </location>
</feature>
<feature type="strand" evidence="13">
    <location>
        <begin position="66"/>
        <end position="77"/>
    </location>
</feature>
<feature type="strand" evidence="13">
    <location>
        <begin position="85"/>
        <end position="93"/>
    </location>
</feature>
<feature type="turn" evidence="13">
    <location>
        <begin position="95"/>
        <end position="97"/>
    </location>
</feature>
<feature type="helix" evidence="13">
    <location>
        <begin position="105"/>
        <end position="119"/>
    </location>
</feature>
<feature type="strand" evidence="13">
    <location>
        <begin position="123"/>
        <end position="130"/>
    </location>
</feature>
<feature type="strand" evidence="13">
    <location>
        <begin position="133"/>
        <end position="143"/>
    </location>
</feature>
<feature type="strand" evidence="13">
    <location>
        <begin position="145"/>
        <end position="153"/>
    </location>
</feature>
<feature type="helix" evidence="13">
    <location>
        <begin position="158"/>
        <end position="161"/>
    </location>
</feature>
<feature type="strand" evidence="13">
    <location>
        <begin position="180"/>
        <end position="182"/>
    </location>
</feature>
<feature type="turn" evidence="13">
    <location>
        <begin position="184"/>
        <end position="186"/>
    </location>
</feature>
<feature type="helix" evidence="13">
    <location>
        <begin position="190"/>
        <end position="202"/>
    </location>
</feature>
<feature type="strand" evidence="13">
    <location>
        <begin position="207"/>
        <end position="212"/>
    </location>
</feature>
<feature type="turn" evidence="13">
    <location>
        <begin position="216"/>
        <end position="218"/>
    </location>
</feature>
<feature type="strand" evidence="13">
    <location>
        <begin position="219"/>
        <end position="224"/>
    </location>
</feature>
<feature type="helix" evidence="13">
    <location>
        <begin position="229"/>
        <end position="249"/>
    </location>
</feature>
<feature type="strand" evidence="13">
    <location>
        <begin position="253"/>
        <end position="255"/>
    </location>
</feature>
<feature type="strand" evidence="13">
    <location>
        <begin position="270"/>
        <end position="277"/>
    </location>
</feature>
<feature type="strand" evidence="13">
    <location>
        <begin position="284"/>
        <end position="287"/>
    </location>
</feature>
<feature type="helix" evidence="13">
    <location>
        <begin position="288"/>
        <end position="290"/>
    </location>
</feature>
<feature type="helix" evidence="13">
    <location>
        <begin position="293"/>
        <end position="304"/>
    </location>
</feature>
<feature type="helix" evidence="13">
    <location>
        <begin position="306"/>
        <end position="313"/>
    </location>
</feature>
<feature type="helix" evidence="13">
    <location>
        <begin position="317"/>
        <end position="321"/>
    </location>
</feature>
<feature type="strand" evidence="12">
    <location>
        <begin position="323"/>
        <end position="326"/>
    </location>
</feature>
<feature type="strand" evidence="13">
    <location>
        <begin position="332"/>
        <end position="338"/>
    </location>
</feature>
<feature type="strand" evidence="13">
    <location>
        <begin position="342"/>
        <end position="345"/>
    </location>
</feature>
<feature type="helix" evidence="13">
    <location>
        <begin position="352"/>
        <end position="354"/>
    </location>
</feature>
<feature type="strand" evidence="13">
    <location>
        <begin position="357"/>
        <end position="359"/>
    </location>
</feature>
<feature type="helix" evidence="13">
    <location>
        <begin position="368"/>
        <end position="385"/>
    </location>
</feature>
<feature type="helix" evidence="13">
    <location>
        <begin position="415"/>
        <end position="424"/>
    </location>
</feature>
<feature type="helix" evidence="13">
    <location>
        <begin position="427"/>
        <end position="430"/>
    </location>
</feature>
<feature type="helix" evidence="13">
    <location>
        <begin position="431"/>
        <end position="433"/>
    </location>
</feature>
<feature type="helix" evidence="13">
    <location>
        <begin position="437"/>
        <end position="456"/>
    </location>
</feature>
<feature type="helix" evidence="13">
    <location>
        <begin position="460"/>
        <end position="466"/>
    </location>
</feature>
<sequence>MSAEHVLTMLNEHEVKFVDLRFTDTKGKEQHVTIPAHQVNAEFFEEGKMFDGSSIGGWKGINESDMVLMPDASTAVIDPFFADSTLIIRCDILEPGTLQGYDRDPRSIAKRAEDYLRSTGIADTVLFGPEPEFFLFDDIRFGSSISGSHVAIDDIEGAWNSSTQYEGGNKGHRPAVKGGYFPVPPVDSAQDIRSEMCLVMEQMGLVVEAHHHEVATAGQNEVATRFNTMTKKADEIQIYKYVVHNVAHRFGKTATFMPKPMFGDNGSGMHCHMSLSKNGVNLFAGDKYAGLSEQALYYIGGVIKHAKAINALANPTTNSYKRLVPGYEAPVMLAYSARNRSASIRIPVVSSPKARRIEVRFPDPAANPYLCFAALLMAGLDGIKNKIHPGEAMDKNLYDLPPEEAKEIPQVAGSLEEALNELDLDREFLKAGGVFTDEAIDAYIALRREEDDRVRMTPHPVEFELYYSV</sequence>
<name>GLN1B_ECOLI</name>
<organism>
    <name type="scientific">Escherichia coli (strain K12)</name>
    <dbReference type="NCBI Taxonomy" id="83333"/>
    <lineage>
        <taxon>Bacteria</taxon>
        <taxon>Pseudomonadati</taxon>
        <taxon>Pseudomonadota</taxon>
        <taxon>Gammaproteobacteria</taxon>
        <taxon>Enterobacterales</taxon>
        <taxon>Enterobacteriaceae</taxon>
        <taxon>Escherichia</taxon>
    </lineage>
</organism>
<evidence type="ECO:0000250" key="1">
    <source>
        <dbReference type="UniProtKB" id="P0A1P6"/>
    </source>
</evidence>
<evidence type="ECO:0000250" key="2">
    <source>
        <dbReference type="UniProtKB" id="P12425"/>
    </source>
</evidence>
<evidence type="ECO:0000250" key="3">
    <source>
        <dbReference type="UniProtKB" id="P77961"/>
    </source>
</evidence>
<evidence type="ECO:0000250" key="4">
    <source>
        <dbReference type="UniProtKB" id="P9WN39"/>
    </source>
</evidence>
<evidence type="ECO:0000250" key="5">
    <source>
        <dbReference type="UniProtKB" id="Q3V5W6"/>
    </source>
</evidence>
<evidence type="ECO:0000255" key="6">
    <source>
        <dbReference type="PROSITE-ProRule" id="PRU01330"/>
    </source>
</evidence>
<evidence type="ECO:0000255" key="7">
    <source>
        <dbReference type="PROSITE-ProRule" id="PRU01331"/>
    </source>
</evidence>
<evidence type="ECO:0000269" key="8">
    <source>
    </source>
</evidence>
<evidence type="ECO:0000269" key="9">
    <source>
    </source>
</evidence>
<evidence type="ECO:0000269" key="10">
    <source>
    </source>
</evidence>
<evidence type="ECO:0000305" key="11"/>
<evidence type="ECO:0007829" key="12">
    <source>
        <dbReference type="PDB" id="8V1Y"/>
    </source>
</evidence>
<evidence type="ECO:0007829" key="13">
    <source>
        <dbReference type="PDB" id="8V22"/>
    </source>
</evidence>
<comment type="function">
    <text evidence="1">Catalyzes the ATP-dependent biosynthesis of glutamine from glutamate and ammonia.</text>
</comment>
<comment type="catalytic activity">
    <reaction evidence="1">
        <text>L-glutamate + NH4(+) + ATP = L-glutamine + ADP + phosphate + H(+)</text>
        <dbReference type="Rhea" id="RHEA:16169"/>
        <dbReference type="ChEBI" id="CHEBI:15378"/>
        <dbReference type="ChEBI" id="CHEBI:28938"/>
        <dbReference type="ChEBI" id="CHEBI:29985"/>
        <dbReference type="ChEBI" id="CHEBI:30616"/>
        <dbReference type="ChEBI" id="CHEBI:43474"/>
        <dbReference type="ChEBI" id="CHEBI:58359"/>
        <dbReference type="ChEBI" id="CHEBI:456216"/>
        <dbReference type="EC" id="6.3.1.2"/>
    </reaction>
</comment>
<comment type="cofactor">
    <cofactor evidence="4">
        <name>Mg(2+)</name>
        <dbReference type="ChEBI" id="CHEBI:18420"/>
    </cofactor>
    <text evidence="4">Binds 2 Mg(2+) ions per subunit.</text>
</comment>
<comment type="activity regulation">
    <text evidence="5">The activity of this enzyme could be controlled by adenylation under conditions of abundant glutamine.</text>
</comment>
<comment type="subunit">
    <text evidence="1">Oligomer of 12 subunits arranged in the form of two hexameric ring.</text>
</comment>
<comment type="interaction">
    <interactant intactId="EBI-909063">
        <id>P0A9C5</id>
    </interactant>
    <interactant intactId="EBI-909063">
        <id>P0A9C5</id>
        <label>glnA</label>
    </interactant>
    <organismsDiffer>false</organismsDiffer>
    <experiments>2</experiments>
</comment>
<comment type="subcellular location">
    <subcellularLocation>
        <location evidence="4">Cytoplasm</location>
    </subcellularLocation>
</comment>
<comment type="similarity">
    <text evidence="11">Belongs to the glutamine synthetase family.</text>
</comment>
<dbReference type="EC" id="6.3.1.2" evidence="1"/>
<dbReference type="EMBL" id="X05173">
    <property type="protein sequence ID" value="CAA28806.1"/>
    <property type="molecule type" value="Genomic_DNA"/>
</dbReference>
<dbReference type="EMBL" id="M13746">
    <property type="protein sequence ID" value="AAA23879.1"/>
    <property type="molecule type" value="Genomic_DNA"/>
</dbReference>
<dbReference type="EMBL" id="L19201">
    <property type="protein sequence ID" value="AAB03004.1"/>
    <property type="molecule type" value="Genomic_DNA"/>
</dbReference>
<dbReference type="EMBL" id="U00096">
    <property type="protein sequence ID" value="AAC76867.1"/>
    <property type="molecule type" value="Genomic_DNA"/>
</dbReference>
<dbReference type="EMBL" id="AP009048">
    <property type="protein sequence ID" value="BAE77439.1"/>
    <property type="molecule type" value="Genomic_DNA"/>
</dbReference>
<dbReference type="EMBL" id="J01618">
    <property type="protein sequence ID" value="AAA98066.1"/>
    <property type="molecule type" value="Genomic_DNA"/>
</dbReference>
<dbReference type="EMBL" id="M10421">
    <property type="protein sequence ID" value="AAA23882.1"/>
    <property type="molecule type" value="Genomic_DNA"/>
</dbReference>
<dbReference type="EMBL" id="K02176">
    <property type="protein sequence ID" value="AAA23880.1"/>
    <property type="molecule type" value="Genomic_DNA"/>
</dbReference>
<dbReference type="PIR" id="S40815">
    <property type="entry name" value="AJECQ"/>
</dbReference>
<dbReference type="RefSeq" id="NP_418306.1">
    <property type="nucleotide sequence ID" value="NC_000913.3"/>
</dbReference>
<dbReference type="RefSeq" id="WP_001271717.1">
    <property type="nucleotide sequence ID" value="NZ_STEB01000017.1"/>
</dbReference>
<dbReference type="PDB" id="7W85">
    <property type="method" value="EM"/>
    <property type="resolution" value="2.94 A"/>
    <property type="chains" value="A/B/C/D/E/F/G/H/I/J/K/L/M/N/O/P/Q/R/S/U/V/W/X/Y=1-469"/>
</dbReference>
<dbReference type="PDB" id="8PVG">
    <property type="method" value="EM"/>
    <property type="resolution" value="3.40 A"/>
    <property type="chains" value="A=1-469"/>
</dbReference>
<dbReference type="PDB" id="8V1Y">
    <property type="method" value="EM"/>
    <property type="resolution" value="2.70 A"/>
    <property type="chains" value="A/B=1-469"/>
</dbReference>
<dbReference type="PDB" id="8V22">
    <property type="method" value="EM"/>
    <property type="resolution" value="2.20 A"/>
    <property type="chains" value="A/B/C/D/E/F/G/H/I/J/K/L=1-469"/>
</dbReference>
<dbReference type="PDBsum" id="7W85"/>
<dbReference type="PDBsum" id="8PVG"/>
<dbReference type="PDBsum" id="8V1Y"/>
<dbReference type="PDBsum" id="8V22"/>
<dbReference type="EMDB" id="EMD-32352"/>
<dbReference type="EMDB" id="EMD-42892"/>
<dbReference type="EMDB" id="EMD-42896"/>
<dbReference type="SMR" id="P0A9C5"/>
<dbReference type="BioGRID" id="4262630">
    <property type="interactions" value="55"/>
</dbReference>
<dbReference type="BioGRID" id="852667">
    <property type="interactions" value="2"/>
</dbReference>
<dbReference type="DIP" id="DIP-9777N"/>
<dbReference type="FunCoup" id="P0A9C5">
    <property type="interactions" value="869"/>
</dbReference>
<dbReference type="IntAct" id="P0A9C5">
    <property type="interactions" value="10"/>
</dbReference>
<dbReference type="STRING" id="511145.b3870"/>
<dbReference type="BindingDB" id="P0A9C5"/>
<dbReference type="ChEMBL" id="CHEMBL3789"/>
<dbReference type="MetOSite" id="P0A9C5"/>
<dbReference type="jPOST" id="P0A9C5"/>
<dbReference type="PaxDb" id="511145-b3870"/>
<dbReference type="EnsemblBacteria" id="AAC76867">
    <property type="protein sequence ID" value="AAC76867"/>
    <property type="gene ID" value="b3870"/>
</dbReference>
<dbReference type="GeneID" id="93778066"/>
<dbReference type="GeneID" id="948370"/>
<dbReference type="KEGG" id="ecj:JW3841"/>
<dbReference type="KEGG" id="eco:b3870"/>
<dbReference type="KEGG" id="ecoc:C3026_20920"/>
<dbReference type="PATRIC" id="fig|1411691.4.peg.2841"/>
<dbReference type="EchoBASE" id="EB0378"/>
<dbReference type="eggNOG" id="COG0174">
    <property type="taxonomic scope" value="Bacteria"/>
</dbReference>
<dbReference type="HOGENOM" id="CLU_017290_1_2_6"/>
<dbReference type="InParanoid" id="P0A9C5"/>
<dbReference type="OMA" id="PHPHEFE"/>
<dbReference type="OrthoDB" id="9807095at2"/>
<dbReference type="PhylomeDB" id="P0A9C5"/>
<dbReference type="BioCyc" id="EcoCyc:GLUTAMINESYN-MONOMER"/>
<dbReference type="BioCyc" id="MetaCyc:GLUTAMINESYN-MONOMER"/>
<dbReference type="SABIO-RK" id="P0A9C5"/>
<dbReference type="PRO" id="PR:P0A9C5"/>
<dbReference type="Proteomes" id="UP000000625">
    <property type="component" value="Chromosome"/>
</dbReference>
<dbReference type="GO" id="GO:0005737">
    <property type="term" value="C:cytoplasm"/>
    <property type="evidence" value="ECO:0000318"/>
    <property type="project" value="GO_Central"/>
</dbReference>
<dbReference type="GO" id="GO:0005829">
    <property type="term" value="C:cytosol"/>
    <property type="evidence" value="ECO:0000314"/>
    <property type="project" value="EcoCyc"/>
</dbReference>
<dbReference type="GO" id="GO:0016020">
    <property type="term" value="C:membrane"/>
    <property type="evidence" value="ECO:0007005"/>
    <property type="project" value="UniProtKB"/>
</dbReference>
<dbReference type="GO" id="GO:0005524">
    <property type="term" value="F:ATP binding"/>
    <property type="evidence" value="ECO:0007669"/>
    <property type="project" value="UniProtKB-KW"/>
</dbReference>
<dbReference type="GO" id="GO:0004356">
    <property type="term" value="F:glutamine synthetase activity"/>
    <property type="evidence" value="ECO:0000314"/>
    <property type="project" value="EcoCyc"/>
</dbReference>
<dbReference type="GO" id="GO:0042802">
    <property type="term" value="F:identical protein binding"/>
    <property type="evidence" value="ECO:0000353"/>
    <property type="project" value="IntAct"/>
</dbReference>
<dbReference type="GO" id="GO:0046872">
    <property type="term" value="F:metal ion binding"/>
    <property type="evidence" value="ECO:0007669"/>
    <property type="project" value="UniProtKB-KW"/>
</dbReference>
<dbReference type="GO" id="GO:0019676">
    <property type="term" value="P:ammonia assimilation cycle"/>
    <property type="evidence" value="ECO:0000314"/>
    <property type="project" value="EcoCyc"/>
</dbReference>
<dbReference type="GO" id="GO:0006542">
    <property type="term" value="P:glutamine biosynthetic process"/>
    <property type="evidence" value="ECO:0000318"/>
    <property type="project" value="GO_Central"/>
</dbReference>
<dbReference type="GO" id="GO:0019740">
    <property type="term" value="P:nitrogen utilization"/>
    <property type="evidence" value="ECO:0000314"/>
    <property type="project" value="EcoCyc"/>
</dbReference>
<dbReference type="GO" id="GO:0009314">
    <property type="term" value="P:response to radiation"/>
    <property type="evidence" value="ECO:0000315"/>
    <property type="project" value="EcoCyc"/>
</dbReference>
<dbReference type="FunFam" id="3.10.20.70:FF:000001">
    <property type="entry name" value="Glutamine synthetase"/>
    <property type="match status" value="1"/>
</dbReference>
<dbReference type="FunFam" id="3.30.590.10:FF:000001">
    <property type="entry name" value="Glutamine synthetase"/>
    <property type="match status" value="1"/>
</dbReference>
<dbReference type="Gene3D" id="3.10.20.70">
    <property type="entry name" value="Glutamine synthetase, N-terminal domain"/>
    <property type="match status" value="1"/>
</dbReference>
<dbReference type="Gene3D" id="3.30.590.10">
    <property type="entry name" value="Glutamine synthetase/guanido kinase, catalytic domain"/>
    <property type="match status" value="1"/>
</dbReference>
<dbReference type="InterPro" id="IPR008147">
    <property type="entry name" value="Gln_synt_N"/>
</dbReference>
<dbReference type="InterPro" id="IPR036651">
    <property type="entry name" value="Gln_synt_N_sf"/>
</dbReference>
<dbReference type="InterPro" id="IPR014746">
    <property type="entry name" value="Gln_synth/guanido_kin_cat_dom"/>
</dbReference>
<dbReference type="InterPro" id="IPR008146">
    <property type="entry name" value="Gln_synth_cat_dom"/>
</dbReference>
<dbReference type="InterPro" id="IPR027303">
    <property type="entry name" value="Gln_synth_gly_rich_site"/>
</dbReference>
<dbReference type="InterPro" id="IPR004809">
    <property type="entry name" value="Gln_synth_I"/>
</dbReference>
<dbReference type="InterPro" id="IPR001637">
    <property type="entry name" value="Gln_synth_I_adenylation_site"/>
</dbReference>
<dbReference type="InterPro" id="IPR027302">
    <property type="entry name" value="Gln_synth_N_conserv_site"/>
</dbReference>
<dbReference type="NCBIfam" id="TIGR00653">
    <property type="entry name" value="GlnA"/>
    <property type="match status" value="1"/>
</dbReference>
<dbReference type="NCBIfam" id="NF007006">
    <property type="entry name" value="PRK09469.1"/>
    <property type="match status" value="1"/>
</dbReference>
<dbReference type="PANTHER" id="PTHR43407">
    <property type="entry name" value="GLUTAMINE SYNTHETASE"/>
    <property type="match status" value="1"/>
</dbReference>
<dbReference type="PANTHER" id="PTHR43407:SF2">
    <property type="entry name" value="GLUTAMINE SYNTHETASE"/>
    <property type="match status" value="1"/>
</dbReference>
<dbReference type="Pfam" id="PF00120">
    <property type="entry name" value="Gln-synt_C"/>
    <property type="match status" value="1"/>
</dbReference>
<dbReference type="Pfam" id="PF03951">
    <property type="entry name" value="Gln-synt_N"/>
    <property type="match status" value="1"/>
</dbReference>
<dbReference type="SMART" id="SM01230">
    <property type="entry name" value="Gln-synt_C"/>
    <property type="match status" value="1"/>
</dbReference>
<dbReference type="SUPFAM" id="SSF54368">
    <property type="entry name" value="Glutamine synthetase, N-terminal domain"/>
    <property type="match status" value="1"/>
</dbReference>
<dbReference type="SUPFAM" id="SSF55931">
    <property type="entry name" value="Glutamine synthetase/guanido kinase"/>
    <property type="match status" value="1"/>
</dbReference>
<dbReference type="PROSITE" id="PS00180">
    <property type="entry name" value="GLNA_1"/>
    <property type="match status" value="1"/>
</dbReference>
<dbReference type="PROSITE" id="PS00182">
    <property type="entry name" value="GLNA_ADENYLATION"/>
    <property type="match status" value="1"/>
</dbReference>
<dbReference type="PROSITE" id="PS00181">
    <property type="entry name" value="GLNA_ATP"/>
    <property type="match status" value="1"/>
</dbReference>
<dbReference type="PROSITE" id="PS51986">
    <property type="entry name" value="GS_BETA_GRASP"/>
    <property type="match status" value="1"/>
</dbReference>
<dbReference type="PROSITE" id="PS51987">
    <property type="entry name" value="GS_CATALYTIC"/>
    <property type="match status" value="1"/>
</dbReference>
<proteinExistence type="evidence at protein level"/>
<gene>
    <name evidence="1" type="primary">glnA</name>
    <name type="ordered locus">b3870</name>
    <name type="ordered locus">JW3841</name>
</gene>